<proteinExistence type="inferred from homology"/>
<comment type="function">
    <text evidence="1">Catalyzes the conversion of 4-hydroxy-tetrahydrodipicolinate (HTPA) to tetrahydrodipicolinate.</text>
</comment>
<comment type="catalytic activity">
    <reaction evidence="1">
        <text>(S)-2,3,4,5-tetrahydrodipicolinate + NAD(+) + H2O = (2S,4S)-4-hydroxy-2,3,4,5-tetrahydrodipicolinate + NADH + H(+)</text>
        <dbReference type="Rhea" id="RHEA:35323"/>
        <dbReference type="ChEBI" id="CHEBI:15377"/>
        <dbReference type="ChEBI" id="CHEBI:15378"/>
        <dbReference type="ChEBI" id="CHEBI:16845"/>
        <dbReference type="ChEBI" id="CHEBI:57540"/>
        <dbReference type="ChEBI" id="CHEBI:57945"/>
        <dbReference type="ChEBI" id="CHEBI:67139"/>
        <dbReference type="EC" id="1.17.1.8"/>
    </reaction>
</comment>
<comment type="catalytic activity">
    <reaction evidence="1">
        <text>(S)-2,3,4,5-tetrahydrodipicolinate + NADP(+) + H2O = (2S,4S)-4-hydroxy-2,3,4,5-tetrahydrodipicolinate + NADPH + H(+)</text>
        <dbReference type="Rhea" id="RHEA:35331"/>
        <dbReference type="ChEBI" id="CHEBI:15377"/>
        <dbReference type="ChEBI" id="CHEBI:15378"/>
        <dbReference type="ChEBI" id="CHEBI:16845"/>
        <dbReference type="ChEBI" id="CHEBI:57783"/>
        <dbReference type="ChEBI" id="CHEBI:58349"/>
        <dbReference type="ChEBI" id="CHEBI:67139"/>
        <dbReference type="EC" id="1.17.1.8"/>
    </reaction>
</comment>
<comment type="pathway">
    <text evidence="1">Amino-acid biosynthesis; L-lysine biosynthesis via DAP pathway; (S)-tetrahydrodipicolinate from L-aspartate: step 4/4.</text>
</comment>
<comment type="subunit">
    <text evidence="1">Homotetramer.</text>
</comment>
<comment type="subcellular location">
    <subcellularLocation>
        <location evidence="1">Cytoplasm</location>
    </subcellularLocation>
</comment>
<comment type="similarity">
    <text evidence="1">Belongs to the DapB family.</text>
</comment>
<comment type="caution">
    <text evidence="2">Was originally thought to be a dihydrodipicolinate reductase (DHDPR), catalyzing the conversion of dihydrodipicolinate to tetrahydrodipicolinate. However, it was shown in E.coli that the substrate of the enzymatic reaction is not dihydrodipicolinate (DHDP) but in fact (2S,4S)-4-hydroxy-2,3,4,5-tetrahydrodipicolinic acid (HTPA), the product released by the DapA-catalyzed reaction.</text>
</comment>
<evidence type="ECO:0000255" key="1">
    <source>
        <dbReference type="HAMAP-Rule" id="MF_00102"/>
    </source>
</evidence>
<evidence type="ECO:0000305" key="2"/>
<dbReference type="EC" id="1.17.1.8" evidence="1"/>
<dbReference type="EMBL" id="CP000948">
    <property type="protein sequence ID" value="ACB01236.1"/>
    <property type="molecule type" value="Genomic_DNA"/>
</dbReference>
<dbReference type="RefSeq" id="WP_000543604.1">
    <property type="nucleotide sequence ID" value="NC_010473.1"/>
</dbReference>
<dbReference type="SMR" id="B1XBF6"/>
<dbReference type="KEGG" id="ecd:ECDH10B_0032"/>
<dbReference type="HOGENOM" id="CLU_047479_2_1_6"/>
<dbReference type="UniPathway" id="UPA00034">
    <property type="reaction ID" value="UER00018"/>
</dbReference>
<dbReference type="GO" id="GO:0005829">
    <property type="term" value="C:cytosol"/>
    <property type="evidence" value="ECO:0007669"/>
    <property type="project" value="TreeGrafter"/>
</dbReference>
<dbReference type="GO" id="GO:0008839">
    <property type="term" value="F:4-hydroxy-tetrahydrodipicolinate reductase"/>
    <property type="evidence" value="ECO:0007669"/>
    <property type="project" value="UniProtKB-EC"/>
</dbReference>
<dbReference type="GO" id="GO:0051287">
    <property type="term" value="F:NAD binding"/>
    <property type="evidence" value="ECO:0007669"/>
    <property type="project" value="UniProtKB-UniRule"/>
</dbReference>
<dbReference type="GO" id="GO:0050661">
    <property type="term" value="F:NADP binding"/>
    <property type="evidence" value="ECO:0007669"/>
    <property type="project" value="UniProtKB-UniRule"/>
</dbReference>
<dbReference type="GO" id="GO:0016726">
    <property type="term" value="F:oxidoreductase activity, acting on CH or CH2 groups, NAD or NADP as acceptor"/>
    <property type="evidence" value="ECO:0007669"/>
    <property type="project" value="UniProtKB-UniRule"/>
</dbReference>
<dbReference type="GO" id="GO:0019877">
    <property type="term" value="P:diaminopimelate biosynthetic process"/>
    <property type="evidence" value="ECO:0007669"/>
    <property type="project" value="UniProtKB-UniRule"/>
</dbReference>
<dbReference type="GO" id="GO:0009089">
    <property type="term" value="P:lysine biosynthetic process via diaminopimelate"/>
    <property type="evidence" value="ECO:0007669"/>
    <property type="project" value="UniProtKB-UniRule"/>
</dbReference>
<dbReference type="CDD" id="cd02274">
    <property type="entry name" value="DHDPR_N"/>
    <property type="match status" value="1"/>
</dbReference>
<dbReference type="FunFam" id="3.30.360.10:FF:000004">
    <property type="entry name" value="4-hydroxy-tetrahydrodipicolinate reductase"/>
    <property type="match status" value="1"/>
</dbReference>
<dbReference type="FunFam" id="3.40.50.720:FF:000048">
    <property type="entry name" value="4-hydroxy-tetrahydrodipicolinate reductase"/>
    <property type="match status" value="1"/>
</dbReference>
<dbReference type="Gene3D" id="3.30.360.10">
    <property type="entry name" value="Dihydrodipicolinate Reductase, domain 2"/>
    <property type="match status" value="1"/>
</dbReference>
<dbReference type="Gene3D" id="3.40.50.720">
    <property type="entry name" value="NAD(P)-binding Rossmann-like Domain"/>
    <property type="match status" value="1"/>
</dbReference>
<dbReference type="HAMAP" id="MF_00102">
    <property type="entry name" value="DapB"/>
    <property type="match status" value="1"/>
</dbReference>
<dbReference type="InterPro" id="IPR022663">
    <property type="entry name" value="DapB_C"/>
</dbReference>
<dbReference type="InterPro" id="IPR000846">
    <property type="entry name" value="DapB_N"/>
</dbReference>
<dbReference type="InterPro" id="IPR022664">
    <property type="entry name" value="DapB_N_CS"/>
</dbReference>
<dbReference type="InterPro" id="IPR023940">
    <property type="entry name" value="DHDPR_bac"/>
</dbReference>
<dbReference type="InterPro" id="IPR036291">
    <property type="entry name" value="NAD(P)-bd_dom_sf"/>
</dbReference>
<dbReference type="NCBIfam" id="TIGR00036">
    <property type="entry name" value="dapB"/>
    <property type="match status" value="1"/>
</dbReference>
<dbReference type="PANTHER" id="PTHR20836:SF0">
    <property type="entry name" value="4-HYDROXY-TETRAHYDRODIPICOLINATE REDUCTASE 1, CHLOROPLASTIC-RELATED"/>
    <property type="match status" value="1"/>
</dbReference>
<dbReference type="PANTHER" id="PTHR20836">
    <property type="entry name" value="DIHYDRODIPICOLINATE REDUCTASE"/>
    <property type="match status" value="1"/>
</dbReference>
<dbReference type="Pfam" id="PF05173">
    <property type="entry name" value="DapB_C"/>
    <property type="match status" value="1"/>
</dbReference>
<dbReference type="Pfam" id="PF01113">
    <property type="entry name" value="DapB_N"/>
    <property type="match status" value="1"/>
</dbReference>
<dbReference type="PIRSF" id="PIRSF000161">
    <property type="entry name" value="DHPR"/>
    <property type="match status" value="1"/>
</dbReference>
<dbReference type="SUPFAM" id="SSF55347">
    <property type="entry name" value="Glyceraldehyde-3-phosphate dehydrogenase-like, C-terminal domain"/>
    <property type="match status" value="1"/>
</dbReference>
<dbReference type="SUPFAM" id="SSF51735">
    <property type="entry name" value="NAD(P)-binding Rossmann-fold domains"/>
    <property type="match status" value="1"/>
</dbReference>
<dbReference type="PROSITE" id="PS01298">
    <property type="entry name" value="DAPB"/>
    <property type="match status" value="1"/>
</dbReference>
<gene>
    <name evidence="1" type="primary">dapB</name>
    <name type="ordered locus">ECDH10B_0032</name>
</gene>
<protein>
    <recommendedName>
        <fullName evidence="1">4-hydroxy-tetrahydrodipicolinate reductase</fullName>
        <shortName evidence="1">HTPA reductase</shortName>
        <ecNumber evidence="1">1.17.1.8</ecNumber>
    </recommendedName>
</protein>
<feature type="chain" id="PRO_1000093965" description="4-hydroxy-tetrahydrodipicolinate reductase">
    <location>
        <begin position="1"/>
        <end position="273"/>
    </location>
</feature>
<feature type="active site" description="Proton donor/acceptor" evidence="1">
    <location>
        <position position="159"/>
    </location>
</feature>
<feature type="active site" description="Proton donor" evidence="1">
    <location>
        <position position="163"/>
    </location>
</feature>
<feature type="binding site" evidence="1">
    <location>
        <begin position="12"/>
        <end position="17"/>
    </location>
    <ligand>
        <name>NAD(+)</name>
        <dbReference type="ChEBI" id="CHEBI:57540"/>
    </ligand>
</feature>
<feature type="binding site" evidence="1">
    <location>
        <position position="38"/>
    </location>
    <ligand>
        <name>NAD(+)</name>
        <dbReference type="ChEBI" id="CHEBI:57540"/>
    </ligand>
</feature>
<feature type="binding site" evidence="1">
    <location>
        <position position="39"/>
    </location>
    <ligand>
        <name>NADP(+)</name>
        <dbReference type="ChEBI" id="CHEBI:58349"/>
    </ligand>
</feature>
<feature type="binding site" evidence="1">
    <location>
        <begin position="102"/>
        <end position="104"/>
    </location>
    <ligand>
        <name>NAD(+)</name>
        <dbReference type="ChEBI" id="CHEBI:57540"/>
    </ligand>
</feature>
<feature type="binding site" evidence="1">
    <location>
        <begin position="126"/>
        <end position="129"/>
    </location>
    <ligand>
        <name>NAD(+)</name>
        <dbReference type="ChEBI" id="CHEBI:57540"/>
    </ligand>
</feature>
<feature type="binding site" evidence="1">
    <location>
        <position position="160"/>
    </location>
    <ligand>
        <name>(S)-2,3,4,5-tetrahydrodipicolinate</name>
        <dbReference type="ChEBI" id="CHEBI:16845"/>
    </ligand>
</feature>
<feature type="binding site" evidence="1">
    <location>
        <begin position="169"/>
        <end position="170"/>
    </location>
    <ligand>
        <name>(S)-2,3,4,5-tetrahydrodipicolinate</name>
        <dbReference type="ChEBI" id="CHEBI:16845"/>
    </ligand>
</feature>
<name>DAPB_ECODH</name>
<reference key="1">
    <citation type="journal article" date="2008" name="J. Bacteriol.">
        <title>The complete genome sequence of Escherichia coli DH10B: insights into the biology of a laboratory workhorse.</title>
        <authorList>
            <person name="Durfee T."/>
            <person name="Nelson R."/>
            <person name="Baldwin S."/>
            <person name="Plunkett G. III"/>
            <person name="Burland V."/>
            <person name="Mau B."/>
            <person name="Petrosino J.F."/>
            <person name="Qin X."/>
            <person name="Muzny D.M."/>
            <person name="Ayele M."/>
            <person name="Gibbs R.A."/>
            <person name="Csorgo B."/>
            <person name="Posfai G."/>
            <person name="Weinstock G.M."/>
            <person name="Blattner F.R."/>
        </authorList>
    </citation>
    <scope>NUCLEOTIDE SEQUENCE [LARGE SCALE GENOMIC DNA]</scope>
    <source>
        <strain>K12 / DH10B</strain>
    </source>
</reference>
<keyword id="KW-0028">Amino-acid biosynthesis</keyword>
<keyword id="KW-0963">Cytoplasm</keyword>
<keyword id="KW-0220">Diaminopimelate biosynthesis</keyword>
<keyword id="KW-0457">Lysine biosynthesis</keyword>
<keyword id="KW-0520">NAD</keyword>
<keyword id="KW-0521">NADP</keyword>
<keyword id="KW-0560">Oxidoreductase</keyword>
<accession>B1XBF6</accession>
<organism>
    <name type="scientific">Escherichia coli (strain K12 / DH10B)</name>
    <dbReference type="NCBI Taxonomy" id="316385"/>
    <lineage>
        <taxon>Bacteria</taxon>
        <taxon>Pseudomonadati</taxon>
        <taxon>Pseudomonadota</taxon>
        <taxon>Gammaproteobacteria</taxon>
        <taxon>Enterobacterales</taxon>
        <taxon>Enterobacteriaceae</taxon>
        <taxon>Escherichia</taxon>
    </lineage>
</organism>
<sequence>MHDANIRVAIAGAGGRMGRQLIQAALALEGVQLGAALEREGSSLLGSDAGELAGAGKTGVTVQSSLDAVKDDFDVFIDFTRPEGTLNHLAFCRQHGKGMVIGTTGFDEAGKQAIRDAAADIAIVFAANFSVGVNVMLKLLEKAAKVMGDYTDIEIIEAHHRHKVDAPSGTALAMGEAIAHALDKDLKDCAVYSREGHTGERVPGTIGFATVRAGDIVGEHTAMFADIGERLEITHKASSRMTFANGAVRSALWLSGKESGLFDMRDVLDLNNL</sequence>